<dbReference type="EMBL" id="AK021066">
    <property type="protein sequence ID" value="BAB32291.1"/>
    <property type="molecule type" value="mRNA"/>
</dbReference>
<dbReference type="EMBL" id="AK045480">
    <property type="protein sequence ID" value="BAC32388.1"/>
    <property type="molecule type" value="mRNA"/>
</dbReference>
<dbReference type="EMBL" id="AK138273">
    <property type="protein sequence ID" value="BAE23605.1"/>
    <property type="molecule type" value="mRNA"/>
</dbReference>
<dbReference type="EMBL" id="AC154639">
    <property type="status" value="NOT_ANNOTATED_CDS"/>
    <property type="molecule type" value="Genomic_DNA"/>
</dbReference>
<dbReference type="CCDS" id="CCDS26772.1"/>
<dbReference type="RefSeq" id="NP_001161875.1">
    <property type="nucleotide sequence ID" value="NM_001168403.1"/>
</dbReference>
<dbReference type="RefSeq" id="NP_084174.2">
    <property type="nucleotide sequence ID" value="NM_029898.3"/>
</dbReference>
<dbReference type="RefSeq" id="XP_006517852.1">
    <property type="nucleotide sequence ID" value="XM_006517789.4"/>
</dbReference>
<dbReference type="SMR" id="Q8BLD6"/>
<dbReference type="FunCoup" id="Q8BLD6">
    <property type="interactions" value="84"/>
</dbReference>
<dbReference type="STRING" id="10090.ENSMUSP00000022275"/>
<dbReference type="GlyGen" id="Q8BLD6">
    <property type="glycosylation" value="1 site, 1 N-linked glycan (1 site)"/>
</dbReference>
<dbReference type="iPTMnet" id="Q8BLD6"/>
<dbReference type="PhosphoSitePlus" id="Q8BLD6"/>
<dbReference type="jPOST" id="Q8BLD6"/>
<dbReference type="PaxDb" id="10090-ENSMUSP00000022275"/>
<dbReference type="ProteomicsDB" id="282004"/>
<dbReference type="Antibodypedia" id="62397">
    <property type="antibodies" value="52 antibodies from 16 providers"/>
</dbReference>
<dbReference type="DNASU" id="77318"/>
<dbReference type="Ensembl" id="ENSMUST00000022275.14">
    <property type="protein sequence ID" value="ENSMUSP00000022275.7"/>
    <property type="gene ID" value="ENSMUSG00000049985.16"/>
</dbReference>
<dbReference type="GeneID" id="77318"/>
<dbReference type="KEGG" id="mmu:77318"/>
<dbReference type="UCSC" id="uc007rwd.2">
    <property type="organism name" value="mouse"/>
</dbReference>
<dbReference type="AGR" id="MGI:1924568"/>
<dbReference type="CTD" id="79722"/>
<dbReference type="MGI" id="MGI:1924568">
    <property type="gene designation" value="Ankrd55"/>
</dbReference>
<dbReference type="VEuPathDB" id="HostDB:ENSMUSG00000049985"/>
<dbReference type="eggNOG" id="KOG0504">
    <property type="taxonomic scope" value="Eukaryota"/>
</dbReference>
<dbReference type="GeneTree" id="ENSGT00950000182908"/>
<dbReference type="InParanoid" id="Q8BLD6"/>
<dbReference type="OMA" id="VFCKAWT"/>
<dbReference type="OrthoDB" id="539213at2759"/>
<dbReference type="PhylomeDB" id="Q8BLD6"/>
<dbReference type="TreeFam" id="TF315452"/>
<dbReference type="BioGRID-ORCS" id="77318">
    <property type="hits" value="0 hits in 77 CRISPR screens"/>
</dbReference>
<dbReference type="ChiTaRS" id="Ankrd55">
    <property type="organism name" value="mouse"/>
</dbReference>
<dbReference type="PRO" id="PR:Q8BLD6"/>
<dbReference type="Proteomes" id="UP000000589">
    <property type="component" value="Chromosome 13"/>
</dbReference>
<dbReference type="RNAct" id="Q8BLD6">
    <property type="molecule type" value="protein"/>
</dbReference>
<dbReference type="Bgee" id="ENSMUSG00000049985">
    <property type="expression patterns" value="Expressed in spermatocyte and 39 other cell types or tissues"/>
</dbReference>
<dbReference type="ExpressionAtlas" id="Q8BLD6">
    <property type="expression patterns" value="baseline and differential"/>
</dbReference>
<dbReference type="Gene3D" id="1.25.40.20">
    <property type="entry name" value="Ankyrin repeat-containing domain"/>
    <property type="match status" value="2"/>
</dbReference>
<dbReference type="InterPro" id="IPR002110">
    <property type="entry name" value="Ankyrin_rpt"/>
</dbReference>
<dbReference type="InterPro" id="IPR036770">
    <property type="entry name" value="Ankyrin_rpt-contain_sf"/>
</dbReference>
<dbReference type="PANTHER" id="PTHR24198">
    <property type="entry name" value="ANKYRIN REPEAT AND PROTEIN KINASE DOMAIN-CONTAINING PROTEIN"/>
    <property type="match status" value="1"/>
</dbReference>
<dbReference type="PANTHER" id="PTHR24198:SF188">
    <property type="entry name" value="ANKYRIN REPEAT DOMAIN 55"/>
    <property type="match status" value="1"/>
</dbReference>
<dbReference type="Pfam" id="PF00023">
    <property type="entry name" value="Ank"/>
    <property type="match status" value="1"/>
</dbReference>
<dbReference type="Pfam" id="PF12796">
    <property type="entry name" value="Ank_2"/>
    <property type="match status" value="2"/>
</dbReference>
<dbReference type="SMART" id="SM00248">
    <property type="entry name" value="ANK"/>
    <property type="match status" value="8"/>
</dbReference>
<dbReference type="SUPFAM" id="SSF48403">
    <property type="entry name" value="Ankyrin repeat"/>
    <property type="match status" value="1"/>
</dbReference>
<dbReference type="PROSITE" id="PS50297">
    <property type="entry name" value="ANK_REP_REGION"/>
    <property type="match status" value="1"/>
</dbReference>
<dbReference type="PROSITE" id="PS50088">
    <property type="entry name" value="ANK_REPEAT"/>
    <property type="match status" value="3"/>
</dbReference>
<name>ANR55_MOUSE</name>
<feature type="chain" id="PRO_0000274411" description="Ankyrin repeat domain-containing protein 55">
    <location>
        <begin position="1"/>
        <end position="626"/>
    </location>
</feature>
<feature type="repeat" description="ANK 1">
    <location>
        <begin position="25"/>
        <end position="54"/>
    </location>
</feature>
<feature type="repeat" description="ANK 2">
    <location>
        <begin position="59"/>
        <end position="88"/>
    </location>
</feature>
<feature type="repeat" description="ANK 3">
    <location>
        <begin position="92"/>
        <end position="124"/>
    </location>
</feature>
<feature type="repeat" description="ANK 4">
    <location>
        <begin position="125"/>
        <end position="156"/>
    </location>
</feature>
<feature type="repeat" description="ANK 5">
    <location>
        <begin position="160"/>
        <end position="189"/>
    </location>
</feature>
<feature type="repeat" description="ANK 6">
    <location>
        <begin position="193"/>
        <end position="222"/>
    </location>
</feature>
<feature type="repeat" description="ANK 7">
    <location>
        <begin position="229"/>
        <end position="259"/>
    </location>
</feature>
<feature type="repeat" description="ANK 8">
    <location>
        <begin position="263"/>
        <end position="292"/>
    </location>
</feature>
<feature type="repeat" description="ANK 9">
    <location>
        <begin position="296"/>
        <end position="325"/>
    </location>
</feature>
<feature type="region of interest" description="Disordered" evidence="1">
    <location>
        <begin position="354"/>
        <end position="377"/>
    </location>
</feature>
<feature type="region of interest" description="Disordered" evidence="1">
    <location>
        <begin position="455"/>
        <end position="491"/>
    </location>
</feature>
<feature type="region of interest" description="Disordered" evidence="1">
    <location>
        <begin position="522"/>
        <end position="626"/>
    </location>
</feature>
<feature type="compositionally biased region" description="Basic and acidic residues" evidence="1">
    <location>
        <begin position="354"/>
        <end position="372"/>
    </location>
</feature>
<feature type="compositionally biased region" description="Basic and acidic residues" evidence="1">
    <location>
        <begin position="604"/>
        <end position="614"/>
    </location>
</feature>
<feature type="compositionally biased region" description="Polar residues" evidence="1">
    <location>
        <begin position="616"/>
        <end position="626"/>
    </location>
</feature>
<feature type="modified residue" description="Phosphoserine" evidence="3">
    <location>
        <position position="474"/>
    </location>
</feature>
<feature type="sequence conflict" description="In Ref. 1; BAC32388." evidence="2" ref="1">
    <original>H</original>
    <variation>N</variation>
    <location>
        <position position="464"/>
    </location>
</feature>
<feature type="sequence conflict" description="In Ref. 1; BAB32291." evidence="2" ref="1">
    <original>V</original>
    <variation>G</variation>
    <location>
        <position position="508"/>
    </location>
</feature>
<protein>
    <recommendedName>
        <fullName>Ankyrin repeat domain-containing protein 55</fullName>
    </recommendedName>
</protein>
<accession>Q8BLD6</accession>
<accession>E9QPX4</accession>
<accession>Q3UUM0</accession>
<accession>Q9CTM6</accession>
<sequence length="626" mass="68524">MRQATMDFSTSSVFDQHKGDSSEEVDLAMVYQAASNGDVNSLTSVIREDPSILECCDSEGCTPLMHAVSGRQVDTVKLLLKMGANINTQDAYGRTSLCLATYLGWLEGCVSLLRNGAKHNIPDKNGRLPLHAATAEPDVRLLIVLLQQSSLSEINHQDTEGMTPLHWAAFHNRPQHTQMLLKKGADPTLVDKDFKTALHWAVQSGNRILCSIILSHRQGPSIINYDDESGKTCVHIAAASGFGDIINDLAKVPECNLQALDVDDRTPLHWAAASGKAECVQSLLDLGMDSNLRDINESTPLAYALYCGHTACVRLLSREGRAEPARPLPSQNSQPQKKEGRFSMLNQIFCKNKKEEQKAHQKDQSRARPKEEETSEVNDIIATFDSVVDTNCQGQPGDQVDMVVFKKRTSENSKYLLPEKKSLARKGLPPIRTQSLPPITLGGHFLTASQGAVSHAGLNAGPQHTAQRSQKSRSEQDLLNNRTGCPVSLENPWKGDTRQVFSCKAWTVSSSDKLLDRLFAGQPGHQELSGPPHLPHLHNPSSGQALQHLSPNRPKIRDLPFTRNSLAPLPDQKFLSGEPLRTNRVLPAIPSQRGHDPSPAGESQRGHDPPRAEESGGSSSPTHDEN</sequence>
<organism>
    <name type="scientific">Mus musculus</name>
    <name type="common">Mouse</name>
    <dbReference type="NCBI Taxonomy" id="10090"/>
    <lineage>
        <taxon>Eukaryota</taxon>
        <taxon>Metazoa</taxon>
        <taxon>Chordata</taxon>
        <taxon>Craniata</taxon>
        <taxon>Vertebrata</taxon>
        <taxon>Euteleostomi</taxon>
        <taxon>Mammalia</taxon>
        <taxon>Eutheria</taxon>
        <taxon>Euarchontoglires</taxon>
        <taxon>Glires</taxon>
        <taxon>Rodentia</taxon>
        <taxon>Myomorpha</taxon>
        <taxon>Muroidea</taxon>
        <taxon>Muridae</taxon>
        <taxon>Murinae</taxon>
        <taxon>Mus</taxon>
        <taxon>Mus</taxon>
    </lineage>
</organism>
<gene>
    <name type="primary">Ankrd55</name>
</gene>
<reference key="1">
    <citation type="journal article" date="2005" name="Science">
        <title>The transcriptional landscape of the mammalian genome.</title>
        <authorList>
            <person name="Carninci P."/>
            <person name="Kasukawa T."/>
            <person name="Katayama S."/>
            <person name="Gough J."/>
            <person name="Frith M.C."/>
            <person name="Maeda N."/>
            <person name="Oyama R."/>
            <person name="Ravasi T."/>
            <person name="Lenhard B."/>
            <person name="Wells C."/>
            <person name="Kodzius R."/>
            <person name="Shimokawa K."/>
            <person name="Bajic V.B."/>
            <person name="Brenner S.E."/>
            <person name="Batalov S."/>
            <person name="Forrest A.R."/>
            <person name="Zavolan M."/>
            <person name="Davis M.J."/>
            <person name="Wilming L.G."/>
            <person name="Aidinis V."/>
            <person name="Allen J.E."/>
            <person name="Ambesi-Impiombato A."/>
            <person name="Apweiler R."/>
            <person name="Aturaliya R.N."/>
            <person name="Bailey T.L."/>
            <person name="Bansal M."/>
            <person name="Baxter L."/>
            <person name="Beisel K.W."/>
            <person name="Bersano T."/>
            <person name="Bono H."/>
            <person name="Chalk A.M."/>
            <person name="Chiu K.P."/>
            <person name="Choudhary V."/>
            <person name="Christoffels A."/>
            <person name="Clutterbuck D.R."/>
            <person name="Crowe M.L."/>
            <person name="Dalla E."/>
            <person name="Dalrymple B.P."/>
            <person name="de Bono B."/>
            <person name="Della Gatta G."/>
            <person name="di Bernardo D."/>
            <person name="Down T."/>
            <person name="Engstrom P."/>
            <person name="Fagiolini M."/>
            <person name="Faulkner G."/>
            <person name="Fletcher C.F."/>
            <person name="Fukushima T."/>
            <person name="Furuno M."/>
            <person name="Futaki S."/>
            <person name="Gariboldi M."/>
            <person name="Georgii-Hemming P."/>
            <person name="Gingeras T.R."/>
            <person name="Gojobori T."/>
            <person name="Green R.E."/>
            <person name="Gustincich S."/>
            <person name="Harbers M."/>
            <person name="Hayashi Y."/>
            <person name="Hensch T.K."/>
            <person name="Hirokawa N."/>
            <person name="Hill D."/>
            <person name="Huminiecki L."/>
            <person name="Iacono M."/>
            <person name="Ikeo K."/>
            <person name="Iwama A."/>
            <person name="Ishikawa T."/>
            <person name="Jakt M."/>
            <person name="Kanapin A."/>
            <person name="Katoh M."/>
            <person name="Kawasawa Y."/>
            <person name="Kelso J."/>
            <person name="Kitamura H."/>
            <person name="Kitano H."/>
            <person name="Kollias G."/>
            <person name="Krishnan S.P."/>
            <person name="Kruger A."/>
            <person name="Kummerfeld S.K."/>
            <person name="Kurochkin I.V."/>
            <person name="Lareau L.F."/>
            <person name="Lazarevic D."/>
            <person name="Lipovich L."/>
            <person name="Liu J."/>
            <person name="Liuni S."/>
            <person name="McWilliam S."/>
            <person name="Madan Babu M."/>
            <person name="Madera M."/>
            <person name="Marchionni L."/>
            <person name="Matsuda H."/>
            <person name="Matsuzawa S."/>
            <person name="Miki H."/>
            <person name="Mignone F."/>
            <person name="Miyake S."/>
            <person name="Morris K."/>
            <person name="Mottagui-Tabar S."/>
            <person name="Mulder N."/>
            <person name="Nakano N."/>
            <person name="Nakauchi H."/>
            <person name="Ng P."/>
            <person name="Nilsson R."/>
            <person name="Nishiguchi S."/>
            <person name="Nishikawa S."/>
            <person name="Nori F."/>
            <person name="Ohara O."/>
            <person name="Okazaki Y."/>
            <person name="Orlando V."/>
            <person name="Pang K.C."/>
            <person name="Pavan W.J."/>
            <person name="Pavesi G."/>
            <person name="Pesole G."/>
            <person name="Petrovsky N."/>
            <person name="Piazza S."/>
            <person name="Reed J."/>
            <person name="Reid J.F."/>
            <person name="Ring B.Z."/>
            <person name="Ringwald M."/>
            <person name="Rost B."/>
            <person name="Ruan Y."/>
            <person name="Salzberg S.L."/>
            <person name="Sandelin A."/>
            <person name="Schneider C."/>
            <person name="Schoenbach C."/>
            <person name="Sekiguchi K."/>
            <person name="Semple C.A."/>
            <person name="Seno S."/>
            <person name="Sessa L."/>
            <person name="Sheng Y."/>
            <person name="Shibata Y."/>
            <person name="Shimada H."/>
            <person name="Shimada K."/>
            <person name="Silva D."/>
            <person name="Sinclair B."/>
            <person name="Sperling S."/>
            <person name="Stupka E."/>
            <person name="Sugiura K."/>
            <person name="Sultana R."/>
            <person name="Takenaka Y."/>
            <person name="Taki K."/>
            <person name="Tammoja K."/>
            <person name="Tan S.L."/>
            <person name="Tang S."/>
            <person name="Taylor M.S."/>
            <person name="Tegner J."/>
            <person name="Teichmann S.A."/>
            <person name="Ueda H.R."/>
            <person name="van Nimwegen E."/>
            <person name="Verardo R."/>
            <person name="Wei C.L."/>
            <person name="Yagi K."/>
            <person name="Yamanishi H."/>
            <person name="Zabarovsky E."/>
            <person name="Zhu S."/>
            <person name="Zimmer A."/>
            <person name="Hide W."/>
            <person name="Bult C."/>
            <person name="Grimmond S.M."/>
            <person name="Teasdale R.D."/>
            <person name="Liu E.T."/>
            <person name="Brusic V."/>
            <person name="Quackenbush J."/>
            <person name="Wahlestedt C."/>
            <person name="Mattick J.S."/>
            <person name="Hume D.A."/>
            <person name="Kai C."/>
            <person name="Sasaki D."/>
            <person name="Tomaru Y."/>
            <person name="Fukuda S."/>
            <person name="Kanamori-Katayama M."/>
            <person name="Suzuki M."/>
            <person name="Aoki J."/>
            <person name="Arakawa T."/>
            <person name="Iida J."/>
            <person name="Imamura K."/>
            <person name="Itoh M."/>
            <person name="Kato T."/>
            <person name="Kawaji H."/>
            <person name="Kawagashira N."/>
            <person name="Kawashima T."/>
            <person name="Kojima M."/>
            <person name="Kondo S."/>
            <person name="Konno H."/>
            <person name="Nakano K."/>
            <person name="Ninomiya N."/>
            <person name="Nishio T."/>
            <person name="Okada M."/>
            <person name="Plessy C."/>
            <person name="Shibata K."/>
            <person name="Shiraki T."/>
            <person name="Suzuki S."/>
            <person name="Tagami M."/>
            <person name="Waki K."/>
            <person name="Watahiki A."/>
            <person name="Okamura-Oho Y."/>
            <person name="Suzuki H."/>
            <person name="Kawai J."/>
            <person name="Hayashizaki Y."/>
        </authorList>
    </citation>
    <scope>NUCLEOTIDE SEQUENCE [LARGE SCALE MRNA]</scope>
    <source>
        <strain>C57BL/6J</strain>
        <tissue>Corpora quadrigemina</tissue>
        <tissue>Corpus striatum</tissue>
        <tissue>Hypothalamus</tissue>
    </source>
</reference>
<reference key="2">
    <citation type="journal article" date="2009" name="PLoS Biol.">
        <title>Lineage-specific biology revealed by a finished genome assembly of the mouse.</title>
        <authorList>
            <person name="Church D.M."/>
            <person name="Goodstadt L."/>
            <person name="Hillier L.W."/>
            <person name="Zody M.C."/>
            <person name="Goldstein S."/>
            <person name="She X."/>
            <person name="Bult C.J."/>
            <person name="Agarwala R."/>
            <person name="Cherry J.L."/>
            <person name="DiCuccio M."/>
            <person name="Hlavina W."/>
            <person name="Kapustin Y."/>
            <person name="Meric P."/>
            <person name="Maglott D."/>
            <person name="Birtle Z."/>
            <person name="Marques A.C."/>
            <person name="Graves T."/>
            <person name="Zhou S."/>
            <person name="Teague B."/>
            <person name="Potamousis K."/>
            <person name="Churas C."/>
            <person name="Place M."/>
            <person name="Herschleb J."/>
            <person name="Runnheim R."/>
            <person name="Forrest D."/>
            <person name="Amos-Landgraf J."/>
            <person name="Schwartz D.C."/>
            <person name="Cheng Z."/>
            <person name="Lindblad-Toh K."/>
            <person name="Eichler E.E."/>
            <person name="Ponting C.P."/>
        </authorList>
    </citation>
    <scope>NUCLEOTIDE SEQUENCE [LARGE SCALE GENOMIC DNA]</scope>
    <source>
        <strain>C57BL/6J</strain>
    </source>
</reference>
<reference key="3">
    <citation type="journal article" date="2009" name="Immunity">
        <title>The phagosomal proteome in interferon-gamma-activated macrophages.</title>
        <authorList>
            <person name="Trost M."/>
            <person name="English L."/>
            <person name="Lemieux S."/>
            <person name="Courcelles M."/>
            <person name="Desjardins M."/>
            <person name="Thibault P."/>
        </authorList>
    </citation>
    <scope>PHOSPHORYLATION [LARGE SCALE ANALYSIS] AT SER-474</scope>
    <scope>IDENTIFICATION BY MASS SPECTROMETRY [LARGE SCALE ANALYSIS]</scope>
</reference>
<keyword id="KW-0040">ANK repeat</keyword>
<keyword id="KW-0597">Phosphoprotein</keyword>
<keyword id="KW-1185">Reference proteome</keyword>
<keyword id="KW-0677">Repeat</keyword>
<proteinExistence type="evidence at protein level"/>
<evidence type="ECO:0000256" key="1">
    <source>
        <dbReference type="SAM" id="MobiDB-lite"/>
    </source>
</evidence>
<evidence type="ECO:0000305" key="2"/>
<evidence type="ECO:0007744" key="3">
    <source>
    </source>
</evidence>